<organism>
    <name type="scientific">Shewanella frigidimarina (strain NCIMB 400)</name>
    <dbReference type="NCBI Taxonomy" id="318167"/>
    <lineage>
        <taxon>Bacteria</taxon>
        <taxon>Pseudomonadati</taxon>
        <taxon>Pseudomonadota</taxon>
        <taxon>Gammaproteobacteria</taxon>
        <taxon>Alteromonadales</taxon>
        <taxon>Shewanellaceae</taxon>
        <taxon>Shewanella</taxon>
    </lineage>
</organism>
<dbReference type="EC" id="4.1.1.19" evidence="1"/>
<dbReference type="EMBL" id="CP000447">
    <property type="protein sequence ID" value="ABI71549.1"/>
    <property type="molecule type" value="Genomic_DNA"/>
</dbReference>
<dbReference type="RefSeq" id="WP_011637165.1">
    <property type="nucleotide sequence ID" value="NC_008345.1"/>
</dbReference>
<dbReference type="SMR" id="Q083L6"/>
<dbReference type="STRING" id="318167.Sfri_1698"/>
<dbReference type="KEGG" id="sfr:Sfri_1698"/>
<dbReference type="eggNOG" id="COG1166">
    <property type="taxonomic scope" value="Bacteria"/>
</dbReference>
<dbReference type="HOGENOM" id="CLU_027243_1_0_6"/>
<dbReference type="OrthoDB" id="9802658at2"/>
<dbReference type="UniPathway" id="UPA00186">
    <property type="reaction ID" value="UER00284"/>
</dbReference>
<dbReference type="Proteomes" id="UP000000684">
    <property type="component" value="Chromosome"/>
</dbReference>
<dbReference type="GO" id="GO:0008792">
    <property type="term" value="F:arginine decarboxylase activity"/>
    <property type="evidence" value="ECO:0007669"/>
    <property type="project" value="UniProtKB-UniRule"/>
</dbReference>
<dbReference type="GO" id="GO:0046872">
    <property type="term" value="F:metal ion binding"/>
    <property type="evidence" value="ECO:0007669"/>
    <property type="project" value="UniProtKB-KW"/>
</dbReference>
<dbReference type="GO" id="GO:0006527">
    <property type="term" value="P:arginine catabolic process"/>
    <property type="evidence" value="ECO:0007669"/>
    <property type="project" value="InterPro"/>
</dbReference>
<dbReference type="GO" id="GO:0033388">
    <property type="term" value="P:putrescine biosynthetic process from arginine"/>
    <property type="evidence" value="ECO:0007669"/>
    <property type="project" value="TreeGrafter"/>
</dbReference>
<dbReference type="GO" id="GO:0008295">
    <property type="term" value="P:spermidine biosynthetic process"/>
    <property type="evidence" value="ECO:0007669"/>
    <property type="project" value="UniProtKB-UniRule"/>
</dbReference>
<dbReference type="CDD" id="cd06830">
    <property type="entry name" value="PLPDE_III_ADC"/>
    <property type="match status" value="1"/>
</dbReference>
<dbReference type="FunFam" id="1.10.287.3440:FF:000001">
    <property type="entry name" value="Biosynthetic arginine decarboxylase"/>
    <property type="match status" value="1"/>
</dbReference>
<dbReference type="FunFam" id="2.40.37.10:FF:000001">
    <property type="entry name" value="Biosynthetic arginine decarboxylase"/>
    <property type="match status" value="1"/>
</dbReference>
<dbReference type="FunFam" id="3.20.20.10:FF:000001">
    <property type="entry name" value="Biosynthetic arginine decarboxylase"/>
    <property type="match status" value="1"/>
</dbReference>
<dbReference type="Gene3D" id="1.10.287.3440">
    <property type="match status" value="1"/>
</dbReference>
<dbReference type="Gene3D" id="1.20.58.930">
    <property type="match status" value="1"/>
</dbReference>
<dbReference type="Gene3D" id="3.20.20.10">
    <property type="entry name" value="Alanine racemase"/>
    <property type="match status" value="1"/>
</dbReference>
<dbReference type="Gene3D" id="2.40.37.10">
    <property type="entry name" value="Lyase, Ornithine Decarboxylase, Chain A, domain 1"/>
    <property type="match status" value="1"/>
</dbReference>
<dbReference type="HAMAP" id="MF_01417">
    <property type="entry name" value="SpeA"/>
    <property type="match status" value="1"/>
</dbReference>
<dbReference type="InterPro" id="IPR009006">
    <property type="entry name" value="Ala_racemase/Decarboxylase_C"/>
</dbReference>
<dbReference type="InterPro" id="IPR040634">
    <property type="entry name" value="Arg_decarb_HB"/>
</dbReference>
<dbReference type="InterPro" id="IPR041128">
    <property type="entry name" value="Arg_decarbox_C"/>
</dbReference>
<dbReference type="InterPro" id="IPR002985">
    <property type="entry name" value="Arg_decrbxlase"/>
</dbReference>
<dbReference type="InterPro" id="IPR022644">
    <property type="entry name" value="De-COase2_N"/>
</dbReference>
<dbReference type="InterPro" id="IPR000183">
    <property type="entry name" value="Orn/DAP/Arg_de-COase"/>
</dbReference>
<dbReference type="InterPro" id="IPR029066">
    <property type="entry name" value="PLP-binding_barrel"/>
</dbReference>
<dbReference type="NCBIfam" id="NF003763">
    <property type="entry name" value="PRK05354.1"/>
    <property type="match status" value="1"/>
</dbReference>
<dbReference type="NCBIfam" id="TIGR01273">
    <property type="entry name" value="speA"/>
    <property type="match status" value="1"/>
</dbReference>
<dbReference type="PANTHER" id="PTHR43295">
    <property type="entry name" value="ARGININE DECARBOXYLASE"/>
    <property type="match status" value="1"/>
</dbReference>
<dbReference type="PANTHER" id="PTHR43295:SF9">
    <property type="entry name" value="BIOSYNTHETIC ARGININE DECARBOXYLASE"/>
    <property type="match status" value="1"/>
</dbReference>
<dbReference type="Pfam" id="PF17810">
    <property type="entry name" value="Arg_decarb_HB"/>
    <property type="match status" value="1"/>
</dbReference>
<dbReference type="Pfam" id="PF17944">
    <property type="entry name" value="Arg_decarbox_C"/>
    <property type="match status" value="1"/>
</dbReference>
<dbReference type="Pfam" id="PF02784">
    <property type="entry name" value="Orn_Arg_deC_N"/>
    <property type="match status" value="1"/>
</dbReference>
<dbReference type="PIRSF" id="PIRSF001336">
    <property type="entry name" value="Arg_decrbxlase"/>
    <property type="match status" value="1"/>
</dbReference>
<dbReference type="PRINTS" id="PR01180">
    <property type="entry name" value="ARGDCRBXLASE"/>
</dbReference>
<dbReference type="PRINTS" id="PR01179">
    <property type="entry name" value="ODADCRBXLASE"/>
</dbReference>
<dbReference type="SUPFAM" id="SSF51419">
    <property type="entry name" value="PLP-binding barrel"/>
    <property type="match status" value="1"/>
</dbReference>
<accession>Q083L6</accession>
<keyword id="KW-0210">Decarboxylase</keyword>
<keyword id="KW-0456">Lyase</keyword>
<keyword id="KW-0460">Magnesium</keyword>
<keyword id="KW-0479">Metal-binding</keyword>
<keyword id="KW-0620">Polyamine biosynthesis</keyword>
<keyword id="KW-0663">Pyridoxal phosphate</keyword>
<keyword id="KW-1185">Reference proteome</keyword>
<keyword id="KW-0745">Spermidine biosynthesis</keyword>
<name>SPEA_SHEFN</name>
<proteinExistence type="inferred from homology"/>
<protein>
    <recommendedName>
        <fullName evidence="1">Biosynthetic arginine decarboxylase</fullName>
        <shortName evidence="1">ADC</shortName>
        <ecNumber evidence="1">4.1.1.19</ecNumber>
    </recommendedName>
</protein>
<comment type="function">
    <text evidence="1">Catalyzes the biosynthesis of agmatine from arginine.</text>
</comment>
<comment type="catalytic activity">
    <reaction evidence="1">
        <text>L-arginine + H(+) = agmatine + CO2</text>
        <dbReference type="Rhea" id="RHEA:17641"/>
        <dbReference type="ChEBI" id="CHEBI:15378"/>
        <dbReference type="ChEBI" id="CHEBI:16526"/>
        <dbReference type="ChEBI" id="CHEBI:32682"/>
        <dbReference type="ChEBI" id="CHEBI:58145"/>
        <dbReference type="EC" id="4.1.1.19"/>
    </reaction>
</comment>
<comment type="cofactor">
    <cofactor evidence="1">
        <name>Mg(2+)</name>
        <dbReference type="ChEBI" id="CHEBI:18420"/>
    </cofactor>
</comment>
<comment type="cofactor">
    <cofactor evidence="1">
        <name>pyridoxal 5'-phosphate</name>
        <dbReference type="ChEBI" id="CHEBI:597326"/>
    </cofactor>
</comment>
<comment type="pathway">
    <text evidence="1">Amine and polyamine biosynthesis; agmatine biosynthesis; agmatine from L-arginine: step 1/1.</text>
</comment>
<comment type="similarity">
    <text evidence="1">Belongs to the Orn/Lys/Arg decarboxylase class-II family. SpeA subfamily.</text>
</comment>
<gene>
    <name evidence="1" type="primary">speA</name>
    <name type="ordered locus">Sfri_1698</name>
</gene>
<feature type="chain" id="PRO_1000024268" description="Biosynthetic arginine decarboxylase">
    <location>
        <begin position="1"/>
        <end position="636"/>
    </location>
</feature>
<feature type="binding site" evidence="1">
    <location>
        <begin position="286"/>
        <end position="296"/>
    </location>
    <ligand>
        <name>substrate</name>
    </ligand>
</feature>
<feature type="modified residue" description="N6-(pyridoxal phosphate)lysine" evidence="1">
    <location>
        <position position="101"/>
    </location>
</feature>
<evidence type="ECO:0000255" key="1">
    <source>
        <dbReference type="HAMAP-Rule" id="MF_01417"/>
    </source>
</evidence>
<reference key="1">
    <citation type="submission" date="2006-08" db="EMBL/GenBank/DDBJ databases">
        <title>Complete sequence of Shewanella frigidimarina NCIMB 400.</title>
        <authorList>
            <consortium name="US DOE Joint Genome Institute"/>
            <person name="Copeland A."/>
            <person name="Lucas S."/>
            <person name="Lapidus A."/>
            <person name="Barry K."/>
            <person name="Detter J.C."/>
            <person name="Glavina del Rio T."/>
            <person name="Hammon N."/>
            <person name="Israni S."/>
            <person name="Dalin E."/>
            <person name="Tice H."/>
            <person name="Pitluck S."/>
            <person name="Fredrickson J.K."/>
            <person name="Kolker E."/>
            <person name="McCuel L.A."/>
            <person name="DiChristina T."/>
            <person name="Nealson K.H."/>
            <person name="Newman D."/>
            <person name="Tiedje J.M."/>
            <person name="Zhou J."/>
            <person name="Romine M.F."/>
            <person name="Culley D.E."/>
            <person name="Serres M."/>
            <person name="Chertkov O."/>
            <person name="Brettin T."/>
            <person name="Bruce D."/>
            <person name="Han C."/>
            <person name="Tapia R."/>
            <person name="Gilna P."/>
            <person name="Schmutz J."/>
            <person name="Larimer F."/>
            <person name="Land M."/>
            <person name="Hauser L."/>
            <person name="Kyrpides N."/>
            <person name="Mikhailova N."/>
            <person name="Richardson P."/>
        </authorList>
    </citation>
    <scope>NUCLEOTIDE SEQUENCE [LARGE SCALE GENOMIC DNA]</scope>
    <source>
        <strain>NCIMB 400</strain>
    </source>
</reference>
<sequence>MSDWSIEDARSGYNVTHWSQGFYGIREDGEVTVSPNPQNPDHKVGLNELAKSMVEAGVSLPVLVRFPQILHHRVESLCEAFNDAIKKYDYQNDYLLVYPIKVNQQKTVVEEILASQKSKEVPQLGLEAGSKPELMAVLAMAQKASSVIVCNGYKDKEYIRLALIGEKLGHKVYIVLEKMSELKMVLIEAEKLGITPRLGLRVRLAFQGKGKWQASGGEKSKFGLSAAQVLKVIAELKSANMLDSLQLLHFHLGSQIANIRDIRQGVSEAGRFYCELRQLGASIDCFDVGGGLAVDYDGTRSQSNNSMNYGLNEYANNIVNVLTDLCNEYEQPMPRIISESGRHLTAHHAVLITDVIGTEAYQPENIQEPSEDAPQLLHNMWQSWLEISGRYDQRAIIEIYHDSQSDISEAHSLFAVGQLSLADRAWAEQANLRVCHEVKGLLSNNNRYHRPVIDELNEKLADKFFVNFSLFQSLPDAWGIDQVFPVLPLSGLDKAPERRAVMLDITCDSDGIVDQYVDGQGIETTLPVPAWSADSPYLIGFFMVGAYQEILGDMHNLFGDTNSAVVRIDERGLSQIESVLEGDTVADVLRYVNLDAVDFMRTYEELVNQHIVEEERASILEELQLGLKGYTYLEDF</sequence>